<proteinExistence type="evidence at protein level"/>
<reference key="1">
    <citation type="journal article" date="1995" name="J. Bacteriol.">
        <title>A gene cluster involved in the utilization of both free heme and heme:hemopexin by Haemophilus influenzae type b.</title>
        <authorList>
            <person name="Cope L.D."/>
            <person name="Yogev R."/>
            <person name="Mueller-Eberhard U."/>
            <person name="Hansen E.J."/>
        </authorList>
    </citation>
    <scope>NUCLEOTIDE SEQUENCE [GENOMIC DNA]</scope>
    <scope>PARTIAL PROTEIN SEQUENCE</scope>
    <source>
        <strain>DL42 / Serotype B</strain>
    </source>
</reference>
<accession>P45356</accession>
<evidence type="ECO:0000250" key="1"/>
<evidence type="ECO:0000255" key="2">
    <source>
        <dbReference type="PROSITE-ProRule" id="PRU01115"/>
    </source>
</evidence>
<evidence type="ECO:0000305" key="3"/>
<keyword id="KW-0998">Cell outer membrane</keyword>
<keyword id="KW-0903">Direct protein sequencing</keyword>
<keyword id="KW-0406">Ion transport</keyword>
<keyword id="KW-0472">Membrane</keyword>
<keyword id="KW-0626">Porin</keyword>
<keyword id="KW-0653">Protein transport</keyword>
<keyword id="KW-0732">Signal</keyword>
<keyword id="KW-0812">Transmembrane</keyword>
<keyword id="KW-1134">Transmembrane beta strand</keyword>
<keyword id="KW-0813">Transport</keyword>
<organism>
    <name type="scientific">Haemophilus influenzae</name>
    <dbReference type="NCBI Taxonomy" id="727"/>
    <lineage>
        <taxon>Bacteria</taxon>
        <taxon>Pseudomonadati</taxon>
        <taxon>Pseudomonadota</taxon>
        <taxon>Gammaproteobacteria</taxon>
        <taxon>Pasteurellales</taxon>
        <taxon>Pasteurellaceae</taxon>
        <taxon>Haemophilus</taxon>
    </lineage>
</organism>
<sequence length="565" mass="62641">MKMRPRYSVIASAVSLGFVLSKSVMALGQPDTGSLNRELEQRQIQSEAKPSGELFNQTANSPYTAQYKQGLKFPLTQVQILDRNNQEVVTDELAHILKNYVGKEVSLSDLSNLANEISEFYRHNNYLVAKAILPPQEIEQGTVKILLLKGNVGEIRLQNHSALSNKFVSRLSNTTVNTSEFILKDELEKFALTINDVPGVNAGLQLSAGKKVGEANLLIKINDAKRFSSYVSVDNQGNKYTGRYRLAAGTKVSNLNGWGDELKLDLMSSNQANLKNARIDYSSLIDGYSTRFGVTANYLDYKLGGNFKSLQSQGHSHTLGAYLLHPTIRTPNFRLSTKVSFNHQNLTDKQQAVYVKQKRKINSLTAGIDGSWNLIKDGTTYFSLSTLFGNLANQTSEKKHNAVENFQPKSHFTVYNYRLSHEQILPKSFAFNIGINGQFADKTLESSQKMLLGGLSGVRGHQAGAASVDEGHLIQTEFKHYLPVFSQSVLVSSLFYDYGLGKYYKNSQFLEQGVKNSVKLQSVGAGLSLSDAGSYAINVSVAKPLDNNINNADKHQFWLSMIKTF</sequence>
<dbReference type="EMBL" id="U09840">
    <property type="protein sequence ID" value="AAA87060.1"/>
    <property type="molecule type" value="Genomic_DNA"/>
</dbReference>
<dbReference type="PIR" id="B57148">
    <property type="entry name" value="B57148"/>
</dbReference>
<dbReference type="SMR" id="P45356"/>
<dbReference type="TCDB" id="1.B.20.3.1">
    <property type="family name" value="the two-partner secretion (tps) family"/>
</dbReference>
<dbReference type="GO" id="GO:0009279">
    <property type="term" value="C:cell outer membrane"/>
    <property type="evidence" value="ECO:0007669"/>
    <property type="project" value="UniProtKB-SubCell"/>
</dbReference>
<dbReference type="GO" id="GO:0046930">
    <property type="term" value="C:pore complex"/>
    <property type="evidence" value="ECO:0007669"/>
    <property type="project" value="UniProtKB-KW"/>
</dbReference>
<dbReference type="GO" id="GO:0098046">
    <property type="term" value="C:type V protein secretion system complex"/>
    <property type="evidence" value="ECO:0007669"/>
    <property type="project" value="TreeGrafter"/>
</dbReference>
<dbReference type="GO" id="GO:0015288">
    <property type="term" value="F:porin activity"/>
    <property type="evidence" value="ECO:0007669"/>
    <property type="project" value="UniProtKB-KW"/>
</dbReference>
<dbReference type="GO" id="GO:0008320">
    <property type="term" value="F:protein transmembrane transporter activity"/>
    <property type="evidence" value="ECO:0007669"/>
    <property type="project" value="TreeGrafter"/>
</dbReference>
<dbReference type="GO" id="GO:0006811">
    <property type="term" value="P:monoatomic ion transport"/>
    <property type="evidence" value="ECO:0007669"/>
    <property type="project" value="UniProtKB-KW"/>
</dbReference>
<dbReference type="GO" id="GO:0046819">
    <property type="term" value="P:protein secretion by the type V secretion system"/>
    <property type="evidence" value="ECO:0007669"/>
    <property type="project" value="TreeGrafter"/>
</dbReference>
<dbReference type="FunFam" id="2.40.160.50:FF:000028">
    <property type="entry name" value="Heme/hemopexin transporter protein HuxB"/>
    <property type="match status" value="1"/>
</dbReference>
<dbReference type="Gene3D" id="3.10.20.310">
    <property type="entry name" value="membrane protein fhac"/>
    <property type="match status" value="1"/>
</dbReference>
<dbReference type="Gene3D" id="2.40.160.50">
    <property type="entry name" value="membrane protein fhac: a member of the omp85/tpsb transporter family"/>
    <property type="match status" value="1"/>
</dbReference>
<dbReference type="InterPro" id="IPR005565">
    <property type="entry name" value="Hemolysn_activator_HlyB_C"/>
</dbReference>
<dbReference type="InterPro" id="IPR013686">
    <property type="entry name" value="Polypept-transport_assoc_ShlB"/>
</dbReference>
<dbReference type="InterPro" id="IPR034746">
    <property type="entry name" value="POTRA"/>
</dbReference>
<dbReference type="InterPro" id="IPR051544">
    <property type="entry name" value="TPS_OM_transporter"/>
</dbReference>
<dbReference type="PANTHER" id="PTHR34597:SF1">
    <property type="entry name" value="HEME_HEMOPEXIN TRANSPORTER PROTEIN HUXB"/>
    <property type="match status" value="1"/>
</dbReference>
<dbReference type="PANTHER" id="PTHR34597">
    <property type="entry name" value="SLR1661 PROTEIN"/>
    <property type="match status" value="1"/>
</dbReference>
<dbReference type="Pfam" id="PF08479">
    <property type="entry name" value="POTRA_2"/>
    <property type="match status" value="1"/>
</dbReference>
<dbReference type="Pfam" id="PF03865">
    <property type="entry name" value="ShlB"/>
    <property type="match status" value="1"/>
</dbReference>
<dbReference type="PROSITE" id="PS51779">
    <property type="entry name" value="POTRA"/>
    <property type="match status" value="1"/>
</dbReference>
<comment type="function">
    <text>Likely functions in the release of soluble HxuA from the cell.</text>
</comment>
<comment type="function">
    <text evidence="1">Probable member of a two partner secretion pathway (TPS) in which it mediates the secretion of HuxA.</text>
</comment>
<comment type="subcellular location">
    <subcellularLocation>
        <location>Cell outer membrane</location>
    </subcellularLocation>
</comment>
<comment type="domain">
    <text evidence="1">Probably a beta-barrel protein.</text>
</comment>
<comment type="similarity">
    <text evidence="3">Belongs to the TPS (TC 1.B.20) family.</text>
</comment>
<protein>
    <recommendedName>
        <fullName>Heme/hemopexin transporter protein HuxB</fullName>
    </recommendedName>
</protein>
<gene>
    <name type="primary">hxuB</name>
</gene>
<name>HXUB2_HAEIF</name>
<feature type="signal peptide">
    <location>
        <begin position="1"/>
        <end position="26"/>
    </location>
</feature>
<feature type="chain" id="PRO_0000021471" description="Heme/hemopexin transporter protein HuxB">
    <location>
        <begin position="27"/>
        <end position="565"/>
    </location>
</feature>
<feature type="domain" description="POTRA" evidence="2">
    <location>
        <begin position="73"/>
        <end position="150"/>
    </location>
</feature>